<organism>
    <name type="scientific">Syntrophus aciditrophicus (strain SB)</name>
    <dbReference type="NCBI Taxonomy" id="56780"/>
    <lineage>
        <taxon>Bacteria</taxon>
        <taxon>Pseudomonadati</taxon>
        <taxon>Thermodesulfobacteriota</taxon>
        <taxon>Syntrophia</taxon>
        <taxon>Syntrophales</taxon>
        <taxon>Syntrophaceae</taxon>
        <taxon>Syntrophus</taxon>
    </lineage>
</organism>
<sequence length="219" mass="24691">MAYFISFEGIEGCGKTTQLKLAAQYLRTLKIPVGTTEEPGGTPLGKKIRNILLNRGPFEICAEAETLLFVAARAQHVREVILPSLARGQWILCDRFSDATAVYQGCVRGIDEAWIRQLDSFATSFLKPNLTLLFDLPAETGLHRAMQRMTGIPENSREDRFEQEGLNFHEKIREGYLALARQESERFRIINAAADIPSIHREVCRHLDVLRQQPEAGLP</sequence>
<gene>
    <name evidence="1" type="primary">tmk</name>
    <name type="ordered locus">SYNAS_17920</name>
    <name type="ORF">SYN_03606</name>
</gene>
<comment type="function">
    <text evidence="1">Phosphorylation of dTMP to form dTDP in both de novo and salvage pathways of dTTP synthesis.</text>
</comment>
<comment type="catalytic activity">
    <reaction evidence="1">
        <text>dTMP + ATP = dTDP + ADP</text>
        <dbReference type="Rhea" id="RHEA:13517"/>
        <dbReference type="ChEBI" id="CHEBI:30616"/>
        <dbReference type="ChEBI" id="CHEBI:58369"/>
        <dbReference type="ChEBI" id="CHEBI:63528"/>
        <dbReference type="ChEBI" id="CHEBI:456216"/>
        <dbReference type="EC" id="2.7.4.9"/>
    </reaction>
</comment>
<comment type="similarity">
    <text evidence="1">Belongs to the thymidylate kinase family.</text>
</comment>
<accession>Q2LUB1</accession>
<reference key="1">
    <citation type="journal article" date="2007" name="Proc. Natl. Acad. Sci. U.S.A.">
        <title>The genome of Syntrophus aciditrophicus: life at the thermodynamic limit of microbial growth.</title>
        <authorList>
            <person name="McInerney M.J."/>
            <person name="Rohlin L."/>
            <person name="Mouttaki H."/>
            <person name="Kim U."/>
            <person name="Krupp R.S."/>
            <person name="Rios-Hernandez L."/>
            <person name="Sieber J."/>
            <person name="Struchtemeyer C.G."/>
            <person name="Bhattacharyya A."/>
            <person name="Campbell J.W."/>
            <person name="Gunsalus R.P."/>
        </authorList>
    </citation>
    <scope>NUCLEOTIDE SEQUENCE [LARGE SCALE GENOMIC DNA]</scope>
    <source>
        <strain>SB</strain>
    </source>
</reference>
<evidence type="ECO:0000255" key="1">
    <source>
        <dbReference type="HAMAP-Rule" id="MF_00165"/>
    </source>
</evidence>
<name>KTHY_SYNAS</name>
<keyword id="KW-0067">ATP-binding</keyword>
<keyword id="KW-0418">Kinase</keyword>
<keyword id="KW-0545">Nucleotide biosynthesis</keyword>
<keyword id="KW-0547">Nucleotide-binding</keyword>
<keyword id="KW-1185">Reference proteome</keyword>
<keyword id="KW-0808">Transferase</keyword>
<proteinExistence type="inferred from homology"/>
<dbReference type="EC" id="2.7.4.9" evidence="1"/>
<dbReference type="EMBL" id="CP000252">
    <property type="protein sequence ID" value="ABC77671.1"/>
    <property type="molecule type" value="Genomic_DNA"/>
</dbReference>
<dbReference type="RefSeq" id="WP_011417693.1">
    <property type="nucleotide sequence ID" value="NC_007759.1"/>
</dbReference>
<dbReference type="SMR" id="Q2LUB1"/>
<dbReference type="FunCoup" id="Q2LUB1">
    <property type="interactions" value="427"/>
</dbReference>
<dbReference type="STRING" id="56780.SYN_03606"/>
<dbReference type="KEGG" id="sat:SYN_03606"/>
<dbReference type="eggNOG" id="COG0125">
    <property type="taxonomic scope" value="Bacteria"/>
</dbReference>
<dbReference type="HOGENOM" id="CLU_049131_0_2_7"/>
<dbReference type="InParanoid" id="Q2LUB1"/>
<dbReference type="OrthoDB" id="9774907at2"/>
<dbReference type="Proteomes" id="UP000001933">
    <property type="component" value="Chromosome"/>
</dbReference>
<dbReference type="GO" id="GO:0005829">
    <property type="term" value="C:cytosol"/>
    <property type="evidence" value="ECO:0007669"/>
    <property type="project" value="TreeGrafter"/>
</dbReference>
<dbReference type="GO" id="GO:0005524">
    <property type="term" value="F:ATP binding"/>
    <property type="evidence" value="ECO:0007669"/>
    <property type="project" value="UniProtKB-UniRule"/>
</dbReference>
<dbReference type="GO" id="GO:0004798">
    <property type="term" value="F:dTMP kinase activity"/>
    <property type="evidence" value="ECO:0007669"/>
    <property type="project" value="UniProtKB-UniRule"/>
</dbReference>
<dbReference type="GO" id="GO:0006233">
    <property type="term" value="P:dTDP biosynthetic process"/>
    <property type="evidence" value="ECO:0007669"/>
    <property type="project" value="InterPro"/>
</dbReference>
<dbReference type="GO" id="GO:0006235">
    <property type="term" value="P:dTTP biosynthetic process"/>
    <property type="evidence" value="ECO:0007669"/>
    <property type="project" value="UniProtKB-UniRule"/>
</dbReference>
<dbReference type="GO" id="GO:0006227">
    <property type="term" value="P:dUDP biosynthetic process"/>
    <property type="evidence" value="ECO:0007669"/>
    <property type="project" value="TreeGrafter"/>
</dbReference>
<dbReference type="CDD" id="cd01672">
    <property type="entry name" value="TMPK"/>
    <property type="match status" value="1"/>
</dbReference>
<dbReference type="FunFam" id="3.40.50.300:FF:000225">
    <property type="entry name" value="Thymidylate kinase"/>
    <property type="match status" value="1"/>
</dbReference>
<dbReference type="Gene3D" id="3.40.50.300">
    <property type="entry name" value="P-loop containing nucleotide triphosphate hydrolases"/>
    <property type="match status" value="1"/>
</dbReference>
<dbReference type="HAMAP" id="MF_00165">
    <property type="entry name" value="Thymidylate_kinase"/>
    <property type="match status" value="1"/>
</dbReference>
<dbReference type="InterPro" id="IPR027417">
    <property type="entry name" value="P-loop_NTPase"/>
</dbReference>
<dbReference type="InterPro" id="IPR039430">
    <property type="entry name" value="Thymidylate_kin-like_dom"/>
</dbReference>
<dbReference type="InterPro" id="IPR018094">
    <property type="entry name" value="Thymidylate_kinase"/>
</dbReference>
<dbReference type="NCBIfam" id="TIGR00041">
    <property type="entry name" value="DTMP_kinase"/>
    <property type="match status" value="1"/>
</dbReference>
<dbReference type="PANTHER" id="PTHR10344">
    <property type="entry name" value="THYMIDYLATE KINASE"/>
    <property type="match status" value="1"/>
</dbReference>
<dbReference type="PANTHER" id="PTHR10344:SF4">
    <property type="entry name" value="UMP-CMP KINASE 2, MITOCHONDRIAL"/>
    <property type="match status" value="1"/>
</dbReference>
<dbReference type="Pfam" id="PF02223">
    <property type="entry name" value="Thymidylate_kin"/>
    <property type="match status" value="1"/>
</dbReference>
<dbReference type="SUPFAM" id="SSF52540">
    <property type="entry name" value="P-loop containing nucleoside triphosphate hydrolases"/>
    <property type="match status" value="1"/>
</dbReference>
<protein>
    <recommendedName>
        <fullName evidence="1">Thymidylate kinase</fullName>
        <ecNumber evidence="1">2.7.4.9</ecNumber>
    </recommendedName>
    <alternativeName>
        <fullName evidence="1">dTMP kinase</fullName>
    </alternativeName>
</protein>
<feature type="chain" id="PRO_1000097436" description="Thymidylate kinase">
    <location>
        <begin position="1"/>
        <end position="219"/>
    </location>
</feature>
<feature type="binding site" evidence="1">
    <location>
        <begin position="9"/>
        <end position="16"/>
    </location>
    <ligand>
        <name>ATP</name>
        <dbReference type="ChEBI" id="CHEBI:30616"/>
    </ligand>
</feature>